<feature type="chain" id="PRO_0000126279" description="Large ribosomal subunit protein bL36">
    <location>
        <begin position="1"/>
        <end position="37"/>
    </location>
</feature>
<evidence type="ECO:0000255" key="1">
    <source>
        <dbReference type="HAMAP-Rule" id="MF_00251"/>
    </source>
</evidence>
<evidence type="ECO:0000305" key="2"/>
<dbReference type="EMBL" id="AB000111">
    <property type="protein sequence ID" value="BAA22469.1"/>
    <property type="molecule type" value="Genomic_DNA"/>
</dbReference>
<dbReference type="EMBL" id="AP008231">
    <property type="protein sequence ID" value="BAD80075.1"/>
    <property type="molecule type" value="Genomic_DNA"/>
</dbReference>
<dbReference type="RefSeq" id="WP_011244195.1">
    <property type="nucleotide sequence ID" value="NZ_CP085785.1"/>
</dbReference>
<dbReference type="SMR" id="O24707"/>
<dbReference type="GeneID" id="72431095"/>
<dbReference type="KEGG" id="syc:syc1885_d"/>
<dbReference type="eggNOG" id="COG0257">
    <property type="taxonomic scope" value="Bacteria"/>
</dbReference>
<dbReference type="Proteomes" id="UP000001175">
    <property type="component" value="Chromosome"/>
</dbReference>
<dbReference type="GO" id="GO:0005737">
    <property type="term" value="C:cytoplasm"/>
    <property type="evidence" value="ECO:0007669"/>
    <property type="project" value="UniProtKB-ARBA"/>
</dbReference>
<dbReference type="GO" id="GO:1990904">
    <property type="term" value="C:ribonucleoprotein complex"/>
    <property type="evidence" value="ECO:0007669"/>
    <property type="project" value="UniProtKB-KW"/>
</dbReference>
<dbReference type="GO" id="GO:0005840">
    <property type="term" value="C:ribosome"/>
    <property type="evidence" value="ECO:0007669"/>
    <property type="project" value="UniProtKB-KW"/>
</dbReference>
<dbReference type="GO" id="GO:0003735">
    <property type="term" value="F:structural constituent of ribosome"/>
    <property type="evidence" value="ECO:0007669"/>
    <property type="project" value="InterPro"/>
</dbReference>
<dbReference type="GO" id="GO:0006412">
    <property type="term" value="P:translation"/>
    <property type="evidence" value="ECO:0007669"/>
    <property type="project" value="UniProtKB-UniRule"/>
</dbReference>
<dbReference type="HAMAP" id="MF_00251">
    <property type="entry name" value="Ribosomal_bL36"/>
    <property type="match status" value="1"/>
</dbReference>
<dbReference type="InterPro" id="IPR000473">
    <property type="entry name" value="Ribosomal_bL36"/>
</dbReference>
<dbReference type="InterPro" id="IPR035977">
    <property type="entry name" value="Ribosomal_bL36_sp"/>
</dbReference>
<dbReference type="NCBIfam" id="TIGR01022">
    <property type="entry name" value="rpmJ_bact"/>
    <property type="match status" value="1"/>
</dbReference>
<dbReference type="PANTHER" id="PTHR42888">
    <property type="entry name" value="50S RIBOSOMAL PROTEIN L36, CHLOROPLASTIC"/>
    <property type="match status" value="1"/>
</dbReference>
<dbReference type="PANTHER" id="PTHR42888:SF1">
    <property type="entry name" value="LARGE RIBOSOMAL SUBUNIT PROTEIN BL36C"/>
    <property type="match status" value="1"/>
</dbReference>
<dbReference type="Pfam" id="PF00444">
    <property type="entry name" value="Ribosomal_L36"/>
    <property type="match status" value="1"/>
</dbReference>
<dbReference type="SUPFAM" id="SSF57840">
    <property type="entry name" value="Ribosomal protein L36"/>
    <property type="match status" value="1"/>
</dbReference>
<dbReference type="PROSITE" id="PS00828">
    <property type="entry name" value="RIBOSOMAL_L36"/>
    <property type="match status" value="1"/>
</dbReference>
<protein>
    <recommendedName>
        <fullName evidence="1">Large ribosomal subunit protein bL36</fullName>
    </recommendedName>
    <alternativeName>
        <fullName evidence="2">50S ribosomal protein L36</fullName>
    </alternativeName>
</protein>
<keyword id="KW-0687">Ribonucleoprotein</keyword>
<keyword id="KW-0689">Ribosomal protein</keyword>
<organism>
    <name type="scientific">Synechococcus sp. (strain ATCC 27144 / PCC 6301 / SAUG 1402/1)</name>
    <name type="common">Anacystis nidulans</name>
    <dbReference type="NCBI Taxonomy" id="269084"/>
    <lineage>
        <taxon>Bacteria</taxon>
        <taxon>Bacillati</taxon>
        <taxon>Cyanobacteriota</taxon>
        <taxon>Cyanophyceae</taxon>
        <taxon>Synechococcales</taxon>
        <taxon>Synechococcaceae</taxon>
        <taxon>Synechococcus</taxon>
    </lineage>
</organism>
<name>RL36_SYNP6</name>
<reference key="1">
    <citation type="journal article" date="1997" name="Gene">
        <title>Organization of a large gene cluster encoding ribosomal proteins in the cyanobacterium Synechococcus sp. strain PCC 6301: comparison of gene clusters among cyanobacteria, eubacteria and chloroplast genomes.</title>
        <authorList>
            <person name="Sugita M."/>
            <person name="Sugishita H."/>
            <person name="Fujishiro T."/>
            <person name="Tsuboi M."/>
            <person name="Sugita C."/>
            <person name="Endo T."/>
            <person name="Sugiura M."/>
        </authorList>
    </citation>
    <scope>NUCLEOTIDE SEQUENCE [GENOMIC DNA]</scope>
</reference>
<reference key="2">
    <citation type="journal article" date="2007" name="Photosyn. Res.">
        <title>Complete nucleotide sequence of the freshwater unicellular cyanobacterium Synechococcus elongatus PCC 6301 chromosome: gene content and organization.</title>
        <authorList>
            <person name="Sugita C."/>
            <person name="Ogata K."/>
            <person name="Shikata M."/>
            <person name="Jikuya H."/>
            <person name="Takano J."/>
            <person name="Furumichi M."/>
            <person name="Kanehisa M."/>
            <person name="Omata T."/>
            <person name="Sugiura M."/>
            <person name="Sugita M."/>
        </authorList>
    </citation>
    <scope>NUCLEOTIDE SEQUENCE [LARGE SCALE GENOMIC DNA]</scope>
    <source>
        <strain>ATCC 27144 / PCC 6301 / SAUG 1402/1</strain>
    </source>
</reference>
<accession>O24707</accession>
<gene>
    <name evidence="1" type="primary">rpmJ</name>
    <name type="synonym">rpl36</name>
    <name type="ordered locus">syc1885_d</name>
</gene>
<sequence length="37" mass="4364">MKVRASVRKICEKCRVIKRRGRVMVICANPKHKQRQG</sequence>
<comment type="similarity">
    <text evidence="1">Belongs to the bacterial ribosomal protein bL36 family.</text>
</comment>
<proteinExistence type="inferred from homology"/>